<feature type="chain" id="PRO_0000057066" description="Diphosphoinositol polyphosphate phosphohydrolase 3-beta">
    <location>
        <begin position="1"/>
        <end position="164"/>
    </location>
</feature>
<feature type="domain" description="Nudix hydrolase" evidence="4">
    <location>
        <begin position="17"/>
        <end position="144"/>
    </location>
</feature>
<feature type="region of interest" description="Disordered" evidence="5">
    <location>
        <begin position="144"/>
        <end position="164"/>
    </location>
</feature>
<feature type="short sequence motif" description="Nudix box">
    <location>
        <begin position="50"/>
        <end position="71"/>
    </location>
</feature>
<feature type="active site" description="Proton acceptor" evidence="1">
    <location>
        <position position="68"/>
    </location>
</feature>
<feature type="binding site" evidence="2">
    <location>
        <position position="9"/>
    </location>
    <ligand>
        <name>substrate</name>
    </ligand>
</feature>
<feature type="binding site" evidence="2">
    <location>
        <begin position="17"/>
        <end position="19"/>
    </location>
    <ligand>
        <name>substrate</name>
    </ligand>
</feature>
<feature type="binding site" evidence="2">
    <location>
        <begin position="38"/>
        <end position="40"/>
    </location>
    <ligand>
        <name>substrate</name>
    </ligand>
</feature>
<feature type="binding site" evidence="2">
    <location>
        <position position="49"/>
    </location>
    <ligand>
        <name>Mg(2+)</name>
        <dbReference type="ChEBI" id="CHEBI:18420"/>
        <label>1</label>
    </ligand>
</feature>
<feature type="binding site" evidence="2">
    <location>
        <position position="65"/>
    </location>
    <ligand>
        <name>Mg(2+)</name>
        <dbReference type="ChEBI" id="CHEBI:18420"/>
        <label>2</label>
    </ligand>
</feature>
<feature type="binding site" evidence="2">
    <location>
        <position position="65"/>
    </location>
    <ligand>
        <name>Mg(2+)</name>
        <dbReference type="ChEBI" id="CHEBI:18420"/>
        <label>3</label>
    </ligand>
</feature>
<feature type="binding site" evidence="2">
    <location>
        <position position="69"/>
    </location>
    <ligand>
        <name>Mg(2+)</name>
        <dbReference type="ChEBI" id="CHEBI:18420"/>
        <label>1</label>
    </ligand>
</feature>
<feature type="binding site" evidence="2">
    <location>
        <begin position="89"/>
        <end position="91"/>
    </location>
    <ligand>
        <name>substrate</name>
    </ligand>
</feature>
<feature type="binding site" evidence="2">
    <location>
        <position position="115"/>
    </location>
    <ligand>
        <name>substrate</name>
    </ligand>
</feature>
<feature type="binding site" evidence="2">
    <location>
        <position position="133"/>
    </location>
    <ligand>
        <name>substrate</name>
    </ligand>
</feature>
<feature type="sequence variant" evidence="6 7">
    <original>I</original>
    <variation>T</variation>
    <location>
        <position position="113"/>
    </location>
</feature>
<proteinExistence type="evidence at protein level"/>
<accession>P0C028</accession>
<accession>Q8BKF4</accession>
<accession>Q9JJD3</accession>
<comment type="function">
    <text>Cleaves a beta-phosphate from the diphosphate groups in PP-InsP5 (diphosphoinositol pentakisphosphate), suggesting that it may play a role in signal transduction. Also able to catalyze the hydrolysis of dinucleoside oligophosphates, with Ap6A and Ap5A being the preferred substrates. The major reaction products are ADP and p4a from Ap6A and ADP and ATP from Ap5A. Also able to hydrolyze 5-phosphoribose 1-diphosphate; however, the relevance of such activity in vivo remains unclear.</text>
</comment>
<comment type="catalytic activity">
    <reaction evidence="6">
        <text>diphospho-myo-inositol polyphosphate + H2O = myo-inositol polyphosphate + phosphate.</text>
        <dbReference type="EC" id="3.6.1.52"/>
    </reaction>
</comment>
<comment type="catalytic activity">
    <reaction evidence="6">
        <text>P(1),P(6)-bis(5'-adenosyl) hexaphosphate + H2O = adenosine 5'-pentaphosphate + AMP + 2 H(+)</text>
        <dbReference type="Rhea" id="RHEA:32047"/>
        <dbReference type="ChEBI" id="CHEBI:15377"/>
        <dbReference type="ChEBI" id="CHEBI:15378"/>
        <dbReference type="ChEBI" id="CHEBI:63740"/>
        <dbReference type="ChEBI" id="CHEBI:63813"/>
        <dbReference type="ChEBI" id="CHEBI:456215"/>
        <dbReference type="EC" id="3.6.1.60"/>
    </reaction>
</comment>
<comment type="catalytic activity">
    <reaction evidence="6">
        <text>P(1),P(5)-bis(5'-adenosyl) pentaphosphate + H2O = adenosine 5'-tetraphosphate + AMP + 2 H(+)</text>
        <dbReference type="Rhea" id="RHEA:32051"/>
        <dbReference type="ChEBI" id="CHEBI:15377"/>
        <dbReference type="ChEBI" id="CHEBI:15378"/>
        <dbReference type="ChEBI" id="CHEBI:58450"/>
        <dbReference type="ChEBI" id="CHEBI:62041"/>
        <dbReference type="ChEBI" id="CHEBI:456215"/>
        <dbReference type="EC" id="3.6.1.60"/>
    </reaction>
</comment>
<comment type="cofactor">
    <cofactor evidence="3">
        <name>Mg(2+)</name>
        <dbReference type="ChEBI" id="CHEBI:18420"/>
    </cofactor>
    <cofactor evidence="3">
        <name>Mn(2+)</name>
        <dbReference type="ChEBI" id="CHEBI:29035"/>
    </cofactor>
    <text evidence="3">Binds 3 Mg(2+) or Mn(2+) ions per subunit. Mn(2+) may be the true cofactor in vivo.</text>
</comment>
<comment type="subcellular location">
    <subcellularLocation>
        <location evidence="3">Cytoplasm</location>
    </subcellularLocation>
</comment>
<comment type="tissue specificity">
    <text evidence="6">Predominantly expressed in brain and is weakly or not expressed in other tissues.</text>
</comment>
<comment type="miscellaneous">
    <text>Nudt10 and Nudt11 code for identical proteins, which gives their indidual characterization difficult. Thus, most experiments do not discriminate between the 2 proteins.</text>
</comment>
<comment type="similarity">
    <text evidence="8">Belongs to the Nudix hydrolase family. DIPP subfamily.</text>
</comment>
<sequence>MKCKPNQTRTYDPEGFKKRAACLCFRSEREDEVLLVSSSRYPDRWIVPGGGMEPEEEPDGAAVREVYEEAGVKGKLGRLLGVFEQNQDRKHRTYVFVLTVTELLEDWEDSVSIGRKREWFKIEDAIKVLQCHKPVHAEYLEKLKLGGSPTNGNSAAPSPPESEP</sequence>
<keyword id="KW-0963">Cytoplasm</keyword>
<keyword id="KW-0378">Hydrolase</keyword>
<keyword id="KW-0460">Magnesium</keyword>
<keyword id="KW-0464">Manganese</keyword>
<keyword id="KW-0479">Metal-binding</keyword>
<keyword id="KW-1185">Reference proteome</keyword>
<organism>
    <name type="scientific">Mus musculus</name>
    <name type="common">Mouse</name>
    <dbReference type="NCBI Taxonomy" id="10090"/>
    <lineage>
        <taxon>Eukaryota</taxon>
        <taxon>Metazoa</taxon>
        <taxon>Chordata</taxon>
        <taxon>Craniata</taxon>
        <taxon>Vertebrata</taxon>
        <taxon>Euteleostomi</taxon>
        <taxon>Mammalia</taxon>
        <taxon>Eutheria</taxon>
        <taxon>Euarchontoglires</taxon>
        <taxon>Glires</taxon>
        <taxon>Rodentia</taxon>
        <taxon>Myomorpha</taxon>
        <taxon>Muroidea</taxon>
        <taxon>Muridae</taxon>
        <taxon>Murinae</taxon>
        <taxon>Mus</taxon>
        <taxon>Mus</taxon>
    </lineage>
</organism>
<name>NUD11_MOUSE</name>
<reference key="1">
    <citation type="journal article" date="2003" name="Biochem. J.">
        <title>Paralogous murine Nudt10 and Nudt11 genes have differential expression patterns but encode identical proteins that are physiologically competent diphosphoinositol polyphosphate phosphohydrolases.</title>
        <authorList>
            <person name="Hua L.V."/>
            <person name="Hidaka K."/>
            <person name="Pesesse X."/>
            <person name="Barnes L.D."/>
            <person name="Shears S.B."/>
        </authorList>
    </citation>
    <scope>NUCLEOTIDE SEQUENCE [MRNA]</scope>
    <scope>CATALYTIC ACTIVITY</scope>
    <scope>TISSUE SPECIFICITY</scope>
    <scope>VARIANT THR-113</scope>
</reference>
<reference key="2">
    <citation type="submission" date="2000-04" db="EMBL/GenBank/DDBJ databases">
        <title>Isolation of full-length cDNA clones from mouse brain cDNA library made by oligo-capping method.</title>
        <authorList>
            <person name="Osada N."/>
            <person name="Kusuda J."/>
            <person name="Tanuma R."/>
            <person name="Ito A."/>
            <person name="Hirata M."/>
            <person name="Sugano S."/>
            <person name="Hashimoto K."/>
        </authorList>
    </citation>
    <scope>NUCLEOTIDE SEQUENCE [LARGE SCALE MRNA]</scope>
    <scope>VARIANT THR-113</scope>
    <source>
        <strain>C57BL/6J</strain>
        <tissue>Brain</tissue>
    </source>
</reference>
<reference key="3">
    <citation type="journal article" date="2005" name="Science">
        <title>The transcriptional landscape of the mammalian genome.</title>
        <authorList>
            <person name="Carninci P."/>
            <person name="Kasukawa T."/>
            <person name="Katayama S."/>
            <person name="Gough J."/>
            <person name="Frith M.C."/>
            <person name="Maeda N."/>
            <person name="Oyama R."/>
            <person name="Ravasi T."/>
            <person name="Lenhard B."/>
            <person name="Wells C."/>
            <person name="Kodzius R."/>
            <person name="Shimokawa K."/>
            <person name="Bajic V.B."/>
            <person name="Brenner S.E."/>
            <person name="Batalov S."/>
            <person name="Forrest A.R."/>
            <person name="Zavolan M."/>
            <person name="Davis M.J."/>
            <person name="Wilming L.G."/>
            <person name="Aidinis V."/>
            <person name="Allen J.E."/>
            <person name="Ambesi-Impiombato A."/>
            <person name="Apweiler R."/>
            <person name="Aturaliya R.N."/>
            <person name="Bailey T.L."/>
            <person name="Bansal M."/>
            <person name="Baxter L."/>
            <person name="Beisel K.W."/>
            <person name="Bersano T."/>
            <person name="Bono H."/>
            <person name="Chalk A.M."/>
            <person name="Chiu K.P."/>
            <person name="Choudhary V."/>
            <person name="Christoffels A."/>
            <person name="Clutterbuck D.R."/>
            <person name="Crowe M.L."/>
            <person name="Dalla E."/>
            <person name="Dalrymple B.P."/>
            <person name="de Bono B."/>
            <person name="Della Gatta G."/>
            <person name="di Bernardo D."/>
            <person name="Down T."/>
            <person name="Engstrom P."/>
            <person name="Fagiolini M."/>
            <person name="Faulkner G."/>
            <person name="Fletcher C.F."/>
            <person name="Fukushima T."/>
            <person name="Furuno M."/>
            <person name="Futaki S."/>
            <person name="Gariboldi M."/>
            <person name="Georgii-Hemming P."/>
            <person name="Gingeras T.R."/>
            <person name="Gojobori T."/>
            <person name="Green R.E."/>
            <person name="Gustincich S."/>
            <person name="Harbers M."/>
            <person name="Hayashi Y."/>
            <person name="Hensch T.K."/>
            <person name="Hirokawa N."/>
            <person name="Hill D."/>
            <person name="Huminiecki L."/>
            <person name="Iacono M."/>
            <person name="Ikeo K."/>
            <person name="Iwama A."/>
            <person name="Ishikawa T."/>
            <person name="Jakt M."/>
            <person name="Kanapin A."/>
            <person name="Katoh M."/>
            <person name="Kawasawa Y."/>
            <person name="Kelso J."/>
            <person name="Kitamura H."/>
            <person name="Kitano H."/>
            <person name="Kollias G."/>
            <person name="Krishnan S.P."/>
            <person name="Kruger A."/>
            <person name="Kummerfeld S.K."/>
            <person name="Kurochkin I.V."/>
            <person name="Lareau L.F."/>
            <person name="Lazarevic D."/>
            <person name="Lipovich L."/>
            <person name="Liu J."/>
            <person name="Liuni S."/>
            <person name="McWilliam S."/>
            <person name="Madan Babu M."/>
            <person name="Madera M."/>
            <person name="Marchionni L."/>
            <person name="Matsuda H."/>
            <person name="Matsuzawa S."/>
            <person name="Miki H."/>
            <person name="Mignone F."/>
            <person name="Miyake S."/>
            <person name="Morris K."/>
            <person name="Mottagui-Tabar S."/>
            <person name="Mulder N."/>
            <person name="Nakano N."/>
            <person name="Nakauchi H."/>
            <person name="Ng P."/>
            <person name="Nilsson R."/>
            <person name="Nishiguchi S."/>
            <person name="Nishikawa S."/>
            <person name="Nori F."/>
            <person name="Ohara O."/>
            <person name="Okazaki Y."/>
            <person name="Orlando V."/>
            <person name="Pang K.C."/>
            <person name="Pavan W.J."/>
            <person name="Pavesi G."/>
            <person name="Pesole G."/>
            <person name="Petrovsky N."/>
            <person name="Piazza S."/>
            <person name="Reed J."/>
            <person name="Reid J.F."/>
            <person name="Ring B.Z."/>
            <person name="Ringwald M."/>
            <person name="Rost B."/>
            <person name="Ruan Y."/>
            <person name="Salzberg S.L."/>
            <person name="Sandelin A."/>
            <person name="Schneider C."/>
            <person name="Schoenbach C."/>
            <person name="Sekiguchi K."/>
            <person name="Semple C.A."/>
            <person name="Seno S."/>
            <person name="Sessa L."/>
            <person name="Sheng Y."/>
            <person name="Shibata Y."/>
            <person name="Shimada H."/>
            <person name="Shimada K."/>
            <person name="Silva D."/>
            <person name="Sinclair B."/>
            <person name="Sperling S."/>
            <person name="Stupka E."/>
            <person name="Sugiura K."/>
            <person name="Sultana R."/>
            <person name="Takenaka Y."/>
            <person name="Taki K."/>
            <person name="Tammoja K."/>
            <person name="Tan S.L."/>
            <person name="Tang S."/>
            <person name="Taylor M.S."/>
            <person name="Tegner J."/>
            <person name="Teichmann S.A."/>
            <person name="Ueda H.R."/>
            <person name="van Nimwegen E."/>
            <person name="Verardo R."/>
            <person name="Wei C.L."/>
            <person name="Yagi K."/>
            <person name="Yamanishi H."/>
            <person name="Zabarovsky E."/>
            <person name="Zhu S."/>
            <person name="Zimmer A."/>
            <person name="Hide W."/>
            <person name="Bult C."/>
            <person name="Grimmond S.M."/>
            <person name="Teasdale R.D."/>
            <person name="Liu E.T."/>
            <person name="Brusic V."/>
            <person name="Quackenbush J."/>
            <person name="Wahlestedt C."/>
            <person name="Mattick J.S."/>
            <person name="Hume D.A."/>
            <person name="Kai C."/>
            <person name="Sasaki D."/>
            <person name="Tomaru Y."/>
            <person name="Fukuda S."/>
            <person name="Kanamori-Katayama M."/>
            <person name="Suzuki M."/>
            <person name="Aoki J."/>
            <person name="Arakawa T."/>
            <person name="Iida J."/>
            <person name="Imamura K."/>
            <person name="Itoh M."/>
            <person name="Kato T."/>
            <person name="Kawaji H."/>
            <person name="Kawagashira N."/>
            <person name="Kawashima T."/>
            <person name="Kojima M."/>
            <person name="Kondo S."/>
            <person name="Konno H."/>
            <person name="Nakano K."/>
            <person name="Ninomiya N."/>
            <person name="Nishio T."/>
            <person name="Okada M."/>
            <person name="Plessy C."/>
            <person name="Shibata K."/>
            <person name="Shiraki T."/>
            <person name="Suzuki S."/>
            <person name="Tagami M."/>
            <person name="Waki K."/>
            <person name="Watahiki A."/>
            <person name="Okamura-Oho Y."/>
            <person name="Suzuki H."/>
            <person name="Kawai J."/>
            <person name="Hayashizaki Y."/>
        </authorList>
    </citation>
    <scope>NUCLEOTIDE SEQUENCE [LARGE SCALE MRNA]</scope>
    <source>
        <strain>C57BL/6J</strain>
        <tissue>Eye</tissue>
    </source>
</reference>
<reference key="4">
    <citation type="journal article" date="2004" name="Genome Res.">
        <title>The status, quality, and expansion of the NIH full-length cDNA project: the Mammalian Gene Collection (MGC).</title>
        <authorList>
            <consortium name="The MGC Project Team"/>
        </authorList>
    </citation>
    <scope>NUCLEOTIDE SEQUENCE [LARGE SCALE MRNA]</scope>
    <source>
        <strain>C57BL/6J</strain>
        <tissue>Brain</tissue>
        <tissue>Embryo</tissue>
    </source>
</reference>
<reference key="5">
    <citation type="journal article" date="2004" name="Mol. Cell. Proteomics">
        <title>Phosphoproteomic analysis of the developing mouse brain.</title>
        <authorList>
            <person name="Ballif B.A."/>
            <person name="Villen J."/>
            <person name="Beausoleil S.A."/>
            <person name="Schwartz D."/>
            <person name="Gygi S.P."/>
        </authorList>
    </citation>
    <scope>IDENTIFICATION BY MASS SPECTROMETRY [LARGE SCALE ANALYSIS]</scope>
    <source>
        <tissue>Embryonic brain</tissue>
    </source>
</reference>
<reference key="6">
    <citation type="journal article" date="2010" name="Cell">
        <title>A tissue-specific atlas of mouse protein phosphorylation and expression.</title>
        <authorList>
            <person name="Huttlin E.L."/>
            <person name="Jedrychowski M.P."/>
            <person name="Elias J.E."/>
            <person name="Goswami T."/>
            <person name="Rad R."/>
            <person name="Beausoleil S.A."/>
            <person name="Villen J."/>
            <person name="Haas W."/>
            <person name="Sowa M.E."/>
            <person name="Gygi S.P."/>
        </authorList>
    </citation>
    <scope>IDENTIFICATION BY MASS SPECTROMETRY [LARGE SCALE ANALYSIS]</scope>
    <source>
        <tissue>Brain</tissue>
        <tissue>Testis</tissue>
    </source>
</reference>
<evidence type="ECO:0000250" key="1"/>
<evidence type="ECO:0000250" key="2">
    <source>
        <dbReference type="UniProtKB" id="O95989"/>
    </source>
</evidence>
<evidence type="ECO:0000250" key="3">
    <source>
        <dbReference type="UniProtKB" id="Q96G61"/>
    </source>
</evidence>
<evidence type="ECO:0000255" key="4">
    <source>
        <dbReference type="PROSITE-ProRule" id="PRU00794"/>
    </source>
</evidence>
<evidence type="ECO:0000256" key="5">
    <source>
        <dbReference type="SAM" id="MobiDB-lite"/>
    </source>
</evidence>
<evidence type="ECO:0000269" key="6">
    <source>
    </source>
</evidence>
<evidence type="ECO:0000269" key="7">
    <source ref="2"/>
</evidence>
<evidence type="ECO:0000305" key="8"/>
<evidence type="ECO:0000312" key="9">
    <source>
        <dbReference type="MGI" id="MGI:1930957"/>
    </source>
</evidence>
<dbReference type="EC" id="3.6.1.52" evidence="6"/>
<dbReference type="EC" id="3.6.1.60" evidence="6"/>
<dbReference type="EMBL" id="AY152853">
    <property type="protein sequence ID" value="AAN41645.1"/>
    <property type="molecule type" value="mRNA"/>
</dbReference>
<dbReference type="EMBL" id="AB041576">
    <property type="protein sequence ID" value="BAA95060.1"/>
    <property type="molecule type" value="mRNA"/>
</dbReference>
<dbReference type="EMBL" id="AK053310">
    <property type="protein sequence ID" value="BAC35339.1"/>
    <property type="molecule type" value="mRNA"/>
</dbReference>
<dbReference type="EMBL" id="BC071274">
    <property type="protein sequence ID" value="AAH71274.1"/>
    <property type="molecule type" value="mRNA"/>
</dbReference>
<dbReference type="CCDS" id="CCDS29955.1"/>
<dbReference type="RefSeq" id="NP_067406.2">
    <property type="nucleotide sequence ID" value="NM_021431.2"/>
</dbReference>
<dbReference type="RefSeq" id="XP_006527609.1">
    <property type="nucleotide sequence ID" value="XM_006527546.2"/>
</dbReference>
<dbReference type="SMR" id="P0C028"/>
<dbReference type="BioGRID" id="208413">
    <property type="interactions" value="1"/>
</dbReference>
<dbReference type="FunCoup" id="P0C028">
    <property type="interactions" value="1598"/>
</dbReference>
<dbReference type="iPTMnet" id="P0C028"/>
<dbReference type="PhosphoSitePlus" id="P0C028"/>
<dbReference type="jPOST" id="P0C028"/>
<dbReference type="ProteomicsDB" id="287846"/>
<dbReference type="DNASU" id="102954"/>
<dbReference type="DNASU" id="58242"/>
<dbReference type="Ensembl" id="ENSMUST00000103006.4">
    <property type="protein sequence ID" value="ENSMUSP00000100071.4"/>
    <property type="gene ID" value="ENSMUSG00000073293.5"/>
</dbReference>
<dbReference type="Ensembl" id="ENSMUST00000103007.4">
    <property type="protein sequence ID" value="ENSMUSP00000100072.4"/>
    <property type="gene ID" value="ENSMUSG00000073295.5"/>
</dbReference>
<dbReference type="GeneID" id="102954"/>
<dbReference type="GeneID" id="58242"/>
<dbReference type="KEGG" id="mmu:102954"/>
<dbReference type="KEGG" id="mmu:58242"/>
<dbReference type="AGR" id="MGI:1930957"/>
<dbReference type="CTD" id="170685"/>
<dbReference type="CTD" id="55190"/>
<dbReference type="MGI" id="MGI:1930957">
    <property type="gene designation" value="Nudt11"/>
</dbReference>
<dbReference type="VEuPathDB" id="HostDB:ENSMUSG00000073293"/>
<dbReference type="VEuPathDB" id="HostDB:ENSMUSG00000073295"/>
<dbReference type="GeneTree" id="ENSGT00940000160559"/>
<dbReference type="HOGENOM" id="CLU_037162_1_0_1"/>
<dbReference type="InParanoid" id="P0C028"/>
<dbReference type="OMA" id="KCEVESH"/>
<dbReference type="OrthoDB" id="2011998at2759"/>
<dbReference type="PhylomeDB" id="P0C028"/>
<dbReference type="TreeFam" id="TF106349"/>
<dbReference type="BRENDA" id="3.6.1.52">
    <property type="organism ID" value="3474"/>
</dbReference>
<dbReference type="Reactome" id="R-MMU-1855167">
    <property type="pathway name" value="Synthesis of pyrophosphates in the cytosol"/>
</dbReference>
<dbReference type="BioGRID-ORCS" id="102954">
    <property type="hits" value="2 hits in 45 CRISPR screens"/>
</dbReference>
<dbReference type="BioGRID-ORCS" id="58242">
    <property type="hits" value="6 hits in 46 CRISPR screens"/>
</dbReference>
<dbReference type="PRO" id="PR:P0C028"/>
<dbReference type="Proteomes" id="UP000000589">
    <property type="component" value="Chromosome X"/>
</dbReference>
<dbReference type="RNAct" id="P0C028">
    <property type="molecule type" value="protein"/>
</dbReference>
<dbReference type="Bgee" id="ENSMUSG00000073293">
    <property type="expression patterns" value="Expressed in cortical plate and 162 other cell types or tissues"/>
</dbReference>
<dbReference type="ExpressionAtlas" id="P0C028">
    <property type="expression patterns" value="baseline and differential"/>
</dbReference>
<dbReference type="GO" id="GO:0005737">
    <property type="term" value="C:cytoplasm"/>
    <property type="evidence" value="ECO:0007669"/>
    <property type="project" value="UniProtKB-SubCell"/>
</dbReference>
<dbReference type="GO" id="GO:0034431">
    <property type="term" value="F:bis(5'-adenosyl)-hexaphosphatase activity"/>
    <property type="evidence" value="ECO:0007669"/>
    <property type="project" value="RHEA"/>
</dbReference>
<dbReference type="GO" id="GO:0008486">
    <property type="term" value="F:diphosphoinositol-polyphosphate diphosphatase activity"/>
    <property type="evidence" value="ECO:0000314"/>
    <property type="project" value="MGI"/>
</dbReference>
<dbReference type="GO" id="GO:0046872">
    <property type="term" value="F:metal ion binding"/>
    <property type="evidence" value="ECO:0007669"/>
    <property type="project" value="UniProtKB-KW"/>
</dbReference>
<dbReference type="CDD" id="cd04666">
    <property type="entry name" value="NUDIX_DIPP2_like_Nudt4"/>
    <property type="match status" value="1"/>
</dbReference>
<dbReference type="FunFam" id="3.90.79.10:FF:000002">
    <property type="entry name" value="diphosphoinositol polyphosphate phosphohydrolase 1"/>
    <property type="match status" value="1"/>
</dbReference>
<dbReference type="Gene3D" id="3.90.79.10">
    <property type="entry name" value="Nucleoside Triphosphate Pyrophosphohydrolase"/>
    <property type="match status" value="1"/>
</dbReference>
<dbReference type="InterPro" id="IPR047198">
    <property type="entry name" value="DDP-like_NUDIX"/>
</dbReference>
<dbReference type="InterPro" id="IPR020476">
    <property type="entry name" value="Nudix_hydrolase"/>
</dbReference>
<dbReference type="InterPro" id="IPR015797">
    <property type="entry name" value="NUDIX_hydrolase-like_dom_sf"/>
</dbReference>
<dbReference type="InterPro" id="IPR020084">
    <property type="entry name" value="NUDIX_hydrolase_CS"/>
</dbReference>
<dbReference type="InterPro" id="IPR000086">
    <property type="entry name" value="NUDIX_hydrolase_dom"/>
</dbReference>
<dbReference type="PANTHER" id="PTHR12629">
    <property type="entry name" value="DIPHOSPHOINOSITOL POLYPHOSPHATE PHOSPHOHYDROLASE"/>
    <property type="match status" value="1"/>
</dbReference>
<dbReference type="PANTHER" id="PTHR12629:SF35">
    <property type="entry name" value="DIPHOSPHOINOSITOL POLYPHOSPHATE PHOSPHOHYDROLASE 3-BETA"/>
    <property type="match status" value="1"/>
</dbReference>
<dbReference type="Pfam" id="PF00293">
    <property type="entry name" value="NUDIX"/>
    <property type="match status" value="1"/>
</dbReference>
<dbReference type="PRINTS" id="PR00502">
    <property type="entry name" value="NUDIXFAMILY"/>
</dbReference>
<dbReference type="SUPFAM" id="SSF55811">
    <property type="entry name" value="Nudix"/>
    <property type="match status" value="1"/>
</dbReference>
<dbReference type="PROSITE" id="PS51462">
    <property type="entry name" value="NUDIX"/>
    <property type="match status" value="1"/>
</dbReference>
<dbReference type="PROSITE" id="PS00893">
    <property type="entry name" value="NUDIX_BOX"/>
    <property type="match status" value="1"/>
</dbReference>
<protein>
    <recommendedName>
        <fullName evidence="8">Diphosphoinositol polyphosphate phosphohydrolase 3-beta</fullName>
        <shortName>DIPP-3-beta</shortName>
        <shortName>DIPP3-beta</shortName>
        <ecNumber evidence="6">3.6.1.52</ecNumber>
    </recommendedName>
    <alternativeName>
        <fullName>Diadenosine 5',5'''-P1,P6-hexaphosphate hydrolase 3-beta</fullName>
    </alternativeName>
    <alternativeName>
        <fullName>Diadenosine hexaphosphate hydrolase (AMP-forming)</fullName>
        <ecNumber evidence="6">3.6.1.60</ecNumber>
    </alternativeName>
    <alternativeName>
        <fullName>Nucleoside diphosphate-linked moiety X motif 11</fullName>
        <shortName>Nudix motif 11</shortName>
    </alternativeName>
</protein>
<gene>
    <name evidence="9" type="primary">Nudt11</name>
    <name type="synonym">Dipp3b</name>
    <name type="ORF">MNCb-1696</name>
</gene>